<keyword id="KW-0687">Ribonucleoprotein</keyword>
<keyword id="KW-0689">Ribosomal protein</keyword>
<keyword id="KW-0694">RNA-binding</keyword>
<keyword id="KW-0699">rRNA-binding</keyword>
<feature type="chain" id="PRO_1000144066" description="Large ribosomal subunit protein uL6">
    <location>
        <begin position="1"/>
        <end position="179"/>
    </location>
</feature>
<comment type="function">
    <text evidence="1">This protein binds to the 23S rRNA, and is important in its secondary structure. It is located near the subunit interface in the base of the L7/L12 stalk, and near the tRNA binding site of the peptidyltransferase center.</text>
</comment>
<comment type="subunit">
    <text evidence="1">Part of the 50S ribosomal subunit.</text>
</comment>
<comment type="similarity">
    <text evidence="1">Belongs to the universal ribosomal protein uL6 family.</text>
</comment>
<accession>B2S2F1</accession>
<reference key="1">
    <citation type="journal article" date="2008" name="BMC Microbiol.">
        <title>Complete genome sequence of Treponema pallidum ssp. pallidum strain SS14 determined with oligonucleotide arrays.</title>
        <authorList>
            <person name="Matejkova P."/>
            <person name="Strouhal M."/>
            <person name="Smajs D."/>
            <person name="Norris S.J."/>
            <person name="Palzkill T."/>
            <person name="Petrosino J.F."/>
            <person name="Sodergren E."/>
            <person name="Norton J.E."/>
            <person name="Singh J."/>
            <person name="Richmond T.A."/>
            <person name="Molla M.N."/>
            <person name="Albert T.J."/>
            <person name="Weinstock G.M."/>
        </authorList>
    </citation>
    <scope>NUCLEOTIDE SEQUENCE [LARGE SCALE GENOMIC DNA]</scope>
    <source>
        <strain>SS14</strain>
    </source>
</reference>
<dbReference type="EMBL" id="CP000805">
    <property type="protein sequence ID" value="ACD70630.1"/>
    <property type="molecule type" value="Genomic_DNA"/>
</dbReference>
<dbReference type="RefSeq" id="WP_010881651.1">
    <property type="nucleotide sequence ID" value="NC_021508.1"/>
</dbReference>
<dbReference type="SMR" id="B2S2F1"/>
<dbReference type="GeneID" id="93875991"/>
<dbReference type="KEGG" id="tpp:TPASS_0204"/>
<dbReference type="PATRIC" id="fig|455434.6.peg.207"/>
<dbReference type="Proteomes" id="UP000001202">
    <property type="component" value="Chromosome"/>
</dbReference>
<dbReference type="GO" id="GO:1990904">
    <property type="term" value="C:ribonucleoprotein complex"/>
    <property type="evidence" value="ECO:0007669"/>
    <property type="project" value="UniProtKB-KW"/>
</dbReference>
<dbReference type="GO" id="GO:0005840">
    <property type="term" value="C:ribosome"/>
    <property type="evidence" value="ECO:0007669"/>
    <property type="project" value="UniProtKB-KW"/>
</dbReference>
<dbReference type="GO" id="GO:0019843">
    <property type="term" value="F:rRNA binding"/>
    <property type="evidence" value="ECO:0007669"/>
    <property type="project" value="UniProtKB-UniRule"/>
</dbReference>
<dbReference type="GO" id="GO:0003735">
    <property type="term" value="F:structural constituent of ribosome"/>
    <property type="evidence" value="ECO:0007669"/>
    <property type="project" value="InterPro"/>
</dbReference>
<dbReference type="GO" id="GO:0002181">
    <property type="term" value="P:cytoplasmic translation"/>
    <property type="evidence" value="ECO:0007669"/>
    <property type="project" value="TreeGrafter"/>
</dbReference>
<dbReference type="FunFam" id="3.90.930.12:FF:000002">
    <property type="entry name" value="50S ribosomal protein L6"/>
    <property type="match status" value="1"/>
</dbReference>
<dbReference type="Gene3D" id="3.90.930.12">
    <property type="entry name" value="Ribosomal protein L6, alpha-beta domain"/>
    <property type="match status" value="2"/>
</dbReference>
<dbReference type="HAMAP" id="MF_01365_B">
    <property type="entry name" value="Ribosomal_uL6_B"/>
    <property type="match status" value="1"/>
</dbReference>
<dbReference type="InterPro" id="IPR000702">
    <property type="entry name" value="Ribosomal_uL6-like"/>
</dbReference>
<dbReference type="InterPro" id="IPR036789">
    <property type="entry name" value="Ribosomal_uL6-like_a/b-dom_sf"/>
</dbReference>
<dbReference type="InterPro" id="IPR020040">
    <property type="entry name" value="Ribosomal_uL6_a/b-dom"/>
</dbReference>
<dbReference type="InterPro" id="IPR019906">
    <property type="entry name" value="Ribosomal_uL6_bac-type"/>
</dbReference>
<dbReference type="InterPro" id="IPR002358">
    <property type="entry name" value="Ribosomal_uL6_CS"/>
</dbReference>
<dbReference type="NCBIfam" id="TIGR03654">
    <property type="entry name" value="L6_bact"/>
    <property type="match status" value="1"/>
</dbReference>
<dbReference type="PANTHER" id="PTHR11655">
    <property type="entry name" value="60S/50S RIBOSOMAL PROTEIN L6/L9"/>
    <property type="match status" value="1"/>
</dbReference>
<dbReference type="PANTHER" id="PTHR11655:SF14">
    <property type="entry name" value="LARGE RIBOSOMAL SUBUNIT PROTEIN UL6M"/>
    <property type="match status" value="1"/>
</dbReference>
<dbReference type="Pfam" id="PF00347">
    <property type="entry name" value="Ribosomal_L6"/>
    <property type="match status" value="2"/>
</dbReference>
<dbReference type="PIRSF" id="PIRSF002162">
    <property type="entry name" value="Ribosomal_L6"/>
    <property type="match status" value="1"/>
</dbReference>
<dbReference type="PRINTS" id="PR00059">
    <property type="entry name" value="RIBOSOMALL6"/>
</dbReference>
<dbReference type="SUPFAM" id="SSF56053">
    <property type="entry name" value="Ribosomal protein L6"/>
    <property type="match status" value="2"/>
</dbReference>
<dbReference type="PROSITE" id="PS00525">
    <property type="entry name" value="RIBOSOMAL_L6_1"/>
    <property type="match status" value="1"/>
</dbReference>
<organism>
    <name type="scientific">Treponema pallidum subsp. pallidum (strain SS14)</name>
    <dbReference type="NCBI Taxonomy" id="455434"/>
    <lineage>
        <taxon>Bacteria</taxon>
        <taxon>Pseudomonadati</taxon>
        <taxon>Spirochaetota</taxon>
        <taxon>Spirochaetia</taxon>
        <taxon>Spirochaetales</taxon>
        <taxon>Treponemataceae</taxon>
        <taxon>Treponema</taxon>
    </lineage>
</organism>
<sequence>MSRIGKVPVSVPGGVHVRVSSGVVEVEGPKGVLSCAFLPVVTVRVEQEYVIVARCDDSKRARACHGLYRKLLSNMVVGVSEGFSKTLVITGIGYRAEVQGRVLVMALGYSNDFTVLIPSGIEVRVESSTRVIVSGVSKERVGEFAAQLRRLRLPEAYKGKGIRYDYETIVRKVGKSGVK</sequence>
<proteinExistence type="inferred from homology"/>
<name>RL6_TREPS</name>
<evidence type="ECO:0000255" key="1">
    <source>
        <dbReference type="HAMAP-Rule" id="MF_01365"/>
    </source>
</evidence>
<evidence type="ECO:0000305" key="2"/>
<gene>
    <name evidence="1" type="primary">rplF</name>
    <name type="ordered locus">TPASS_0204</name>
</gene>
<protein>
    <recommendedName>
        <fullName evidence="1">Large ribosomal subunit protein uL6</fullName>
    </recommendedName>
    <alternativeName>
        <fullName evidence="2">50S ribosomal protein L6</fullName>
    </alternativeName>
</protein>